<sequence>MTKLESLLHASTGLSLISGYLMYNRRYLLSFDKKREGETTQSISVIIPARNEEKRLPKLLKSLSQQSMRVECIVMDDDSNDRTAEIAREMGAKVYNVTYDNNGNTWIGKSYACYLGASYTVSDILIFMDADVELNNEHALEAIIQSYARQQYRGLMSIQPYHVVYKPYEHLSAMFNLMTVVGTNSFSTLSKSKGESLAFGPVTVMNKSDYILTQGHKNAASHIIEGFSLGKAFQRCQLPVTRFEGQGFVSFRMYEAGFKTMIEGWTKHLAVGASSTQPHIMMLIILWMVGCITSFSGLALSLFMKTLSFKRMALSYSLYTLQFIRLHRRVGRFSILFLAINSILFLVFILVYINSYRHIHYTKQVKWKGRQFSIK</sequence>
<accession>Q4L977</accession>
<dbReference type="EC" id="2.4.1.-"/>
<dbReference type="EMBL" id="AP006716">
    <property type="protein sequence ID" value="BAE03798.1"/>
    <property type="molecule type" value="Genomic_DNA"/>
</dbReference>
<dbReference type="RefSeq" id="WP_011274814.1">
    <property type="nucleotide sequence ID" value="NC_007168.1"/>
</dbReference>
<dbReference type="SMR" id="Q4L977"/>
<dbReference type="CAZy" id="GT2">
    <property type="family name" value="Glycosyltransferase Family 2"/>
</dbReference>
<dbReference type="KEGG" id="sha:SH0489"/>
<dbReference type="eggNOG" id="COG0463">
    <property type="taxonomic scope" value="Bacteria"/>
</dbReference>
<dbReference type="HOGENOM" id="CLU_038143_1_0_9"/>
<dbReference type="OrthoDB" id="9806525at2"/>
<dbReference type="UniPathway" id="UPA00029">
    <property type="reaction ID" value="UER00559"/>
</dbReference>
<dbReference type="Proteomes" id="UP000000543">
    <property type="component" value="Chromosome"/>
</dbReference>
<dbReference type="GO" id="GO:0005886">
    <property type="term" value="C:plasma membrane"/>
    <property type="evidence" value="ECO:0007669"/>
    <property type="project" value="UniProtKB-SubCell"/>
</dbReference>
<dbReference type="GO" id="GO:0016757">
    <property type="term" value="F:glycosyltransferase activity"/>
    <property type="evidence" value="ECO:0007669"/>
    <property type="project" value="UniProtKB-KW"/>
</dbReference>
<dbReference type="GO" id="GO:0016117">
    <property type="term" value="P:carotenoid biosynthetic process"/>
    <property type="evidence" value="ECO:0007669"/>
    <property type="project" value="UniProtKB-KW"/>
</dbReference>
<dbReference type="CDD" id="cd04179">
    <property type="entry name" value="DPM_DPG-synthase_like"/>
    <property type="match status" value="1"/>
</dbReference>
<dbReference type="Gene3D" id="3.90.550.10">
    <property type="entry name" value="Spore Coat Polysaccharide Biosynthesis Protein SpsA, Chain A"/>
    <property type="match status" value="1"/>
</dbReference>
<dbReference type="InterPro" id="IPR001173">
    <property type="entry name" value="Glyco_trans_2-like"/>
</dbReference>
<dbReference type="InterPro" id="IPR029044">
    <property type="entry name" value="Nucleotide-diphossugar_trans"/>
</dbReference>
<dbReference type="PANTHER" id="PTHR43646">
    <property type="entry name" value="GLYCOSYLTRANSFERASE"/>
    <property type="match status" value="1"/>
</dbReference>
<dbReference type="PANTHER" id="PTHR43646:SF2">
    <property type="entry name" value="GLYCOSYLTRANSFERASE 2-LIKE DOMAIN-CONTAINING PROTEIN"/>
    <property type="match status" value="1"/>
</dbReference>
<dbReference type="Pfam" id="PF00535">
    <property type="entry name" value="Glycos_transf_2"/>
    <property type="match status" value="1"/>
</dbReference>
<dbReference type="SUPFAM" id="SSF53448">
    <property type="entry name" value="Nucleotide-diphospho-sugar transferases"/>
    <property type="match status" value="1"/>
</dbReference>
<evidence type="ECO:0000250" key="1"/>
<evidence type="ECO:0000255" key="2"/>
<evidence type="ECO:0000305" key="3"/>
<gene>
    <name type="primary">crtQ</name>
    <name type="ordered locus">SH0489</name>
</gene>
<protein>
    <recommendedName>
        <fullName>4,4'-diaponeurosporenoate glycosyltransferase</fullName>
        <ecNumber>2.4.1.-</ecNumber>
    </recommendedName>
</protein>
<feature type="chain" id="PRO_0000284867" description="4,4'-diaponeurosporenoate glycosyltransferase">
    <location>
        <begin position="1"/>
        <end position="375"/>
    </location>
</feature>
<feature type="transmembrane region" description="Helical" evidence="2">
    <location>
        <begin position="7"/>
        <end position="23"/>
    </location>
</feature>
<feature type="transmembrane region" description="Helical" evidence="2">
    <location>
        <begin position="112"/>
        <end position="132"/>
    </location>
</feature>
<feature type="transmembrane region" description="Helical" evidence="2">
    <location>
        <begin position="280"/>
        <end position="300"/>
    </location>
</feature>
<feature type="transmembrane region" description="Helical" evidence="2">
    <location>
        <begin position="333"/>
        <end position="353"/>
    </location>
</feature>
<proteinExistence type="inferred from homology"/>
<name>CRTQ_STAHJ</name>
<organism>
    <name type="scientific">Staphylococcus haemolyticus (strain JCSC1435)</name>
    <dbReference type="NCBI Taxonomy" id="279808"/>
    <lineage>
        <taxon>Bacteria</taxon>
        <taxon>Bacillati</taxon>
        <taxon>Bacillota</taxon>
        <taxon>Bacilli</taxon>
        <taxon>Bacillales</taxon>
        <taxon>Staphylococcaceae</taxon>
        <taxon>Staphylococcus</taxon>
    </lineage>
</organism>
<reference key="1">
    <citation type="journal article" date="2005" name="J. Bacteriol.">
        <title>Whole-genome sequencing of Staphylococcus haemolyticus uncovers the extreme plasticity of its genome and the evolution of human-colonizing staphylococcal species.</title>
        <authorList>
            <person name="Takeuchi F."/>
            <person name="Watanabe S."/>
            <person name="Baba T."/>
            <person name="Yuzawa H."/>
            <person name="Ito T."/>
            <person name="Morimoto Y."/>
            <person name="Kuroda M."/>
            <person name="Cui L."/>
            <person name="Takahashi M."/>
            <person name="Ankai A."/>
            <person name="Baba S."/>
            <person name="Fukui S."/>
            <person name="Lee J.C."/>
            <person name="Hiramatsu K."/>
        </authorList>
    </citation>
    <scope>NUCLEOTIDE SEQUENCE [LARGE SCALE GENOMIC DNA]</scope>
    <source>
        <strain>JCSC1435</strain>
    </source>
</reference>
<keyword id="KW-0125">Carotenoid biosynthesis</keyword>
<keyword id="KW-1003">Cell membrane</keyword>
<keyword id="KW-0328">Glycosyltransferase</keyword>
<keyword id="KW-0472">Membrane</keyword>
<keyword id="KW-0808">Transferase</keyword>
<keyword id="KW-0812">Transmembrane</keyword>
<keyword id="KW-1133">Transmembrane helix</keyword>
<comment type="function">
    <text evidence="1">Catalyzes the glycosylation of 4,4'-diaponeurosporenoate, i.e. the esterification of glucose at the C1'' position with the carboxyl group of 4,4'-diaponeurosporenic acid, to form glycosyl-4,4'-diaponeurosporenoate. This is a step in the biosynthesis of staphyloxanthin, an orange pigment present in most staphylococci strains (By similarity).</text>
</comment>
<comment type="pathway">
    <text>Carotenoid biosynthesis; staphyloxanthin biosynthesis; staphyloxanthin from farnesyl diphosphate: step 4/5.</text>
</comment>
<comment type="subcellular location">
    <subcellularLocation>
        <location evidence="3">Cell membrane</location>
        <topology evidence="3">Multi-pass membrane protein</topology>
    </subcellularLocation>
</comment>
<comment type="similarity">
    <text evidence="3">Belongs to the glycosyltransferase 2 family. CrtQ subfamily.</text>
</comment>